<gene>
    <name evidence="1" type="primary">clpP</name>
    <name type="ordered locus">RF_0772</name>
</gene>
<name>CLPP_RICFE</name>
<reference key="1">
    <citation type="journal article" date="2005" name="PLoS Biol.">
        <title>The genome sequence of Rickettsia felis identifies the first putative conjugative plasmid in an obligate intracellular parasite.</title>
        <authorList>
            <person name="Ogata H."/>
            <person name="Renesto P."/>
            <person name="Audic S."/>
            <person name="Robert C."/>
            <person name="Blanc G."/>
            <person name="Fournier P.-E."/>
            <person name="Parinello H."/>
            <person name="Claverie J.-M."/>
            <person name="Raoult D."/>
        </authorList>
    </citation>
    <scope>NUCLEOTIDE SEQUENCE [LARGE SCALE GENOMIC DNA]</scope>
    <source>
        <strain>ATCC VR-1525 / URRWXCal2</strain>
    </source>
</reference>
<comment type="function">
    <text evidence="1">Cleaves peptides in various proteins in a process that requires ATP hydrolysis. Has a chymotrypsin-like activity. Plays a major role in the degradation of misfolded proteins.</text>
</comment>
<comment type="catalytic activity">
    <reaction evidence="1">
        <text>Hydrolysis of proteins to small peptides in the presence of ATP and magnesium. alpha-casein is the usual test substrate. In the absence of ATP, only oligopeptides shorter than five residues are hydrolyzed (such as succinyl-Leu-Tyr-|-NHMec, and Leu-Tyr-Leu-|-Tyr-Trp, in which cleavage of the -Tyr-|-Leu- and -Tyr-|-Trp bonds also occurs).</text>
        <dbReference type="EC" id="3.4.21.92"/>
    </reaction>
</comment>
<comment type="subunit">
    <text evidence="1">Fourteen ClpP subunits assemble into 2 heptameric rings which stack back to back to give a disk-like structure with a central cavity, resembling the structure of eukaryotic proteasomes.</text>
</comment>
<comment type="subcellular location">
    <subcellularLocation>
        <location evidence="1">Cytoplasm</location>
    </subcellularLocation>
</comment>
<comment type="similarity">
    <text evidence="1">Belongs to the peptidase S14 family.</text>
</comment>
<accession>Q4ULF0</accession>
<keyword id="KW-0963">Cytoplasm</keyword>
<keyword id="KW-0378">Hydrolase</keyword>
<keyword id="KW-0645">Protease</keyword>
<keyword id="KW-0720">Serine protease</keyword>
<proteinExistence type="inferred from homology"/>
<feature type="chain" id="PRO_0000226466" description="ATP-dependent Clp protease proteolytic subunit">
    <location>
        <begin position="1"/>
        <end position="201"/>
    </location>
</feature>
<feature type="active site" description="Nucleophile" evidence="1">
    <location>
        <position position="98"/>
    </location>
</feature>
<feature type="active site" evidence="1">
    <location>
        <position position="123"/>
    </location>
</feature>
<dbReference type="EC" id="3.4.21.92" evidence="1"/>
<dbReference type="EMBL" id="CP000053">
    <property type="protein sequence ID" value="AAY61623.1"/>
    <property type="molecule type" value="Genomic_DNA"/>
</dbReference>
<dbReference type="SMR" id="Q4ULF0"/>
<dbReference type="STRING" id="315456.RF_0772"/>
<dbReference type="MEROPS" id="S14.001"/>
<dbReference type="KEGG" id="rfe:RF_0772"/>
<dbReference type="eggNOG" id="COG0740">
    <property type="taxonomic scope" value="Bacteria"/>
</dbReference>
<dbReference type="HOGENOM" id="CLU_058707_3_3_5"/>
<dbReference type="OrthoDB" id="9802800at2"/>
<dbReference type="Proteomes" id="UP000008548">
    <property type="component" value="Chromosome"/>
</dbReference>
<dbReference type="GO" id="GO:0005737">
    <property type="term" value="C:cytoplasm"/>
    <property type="evidence" value="ECO:0007669"/>
    <property type="project" value="UniProtKB-SubCell"/>
</dbReference>
<dbReference type="GO" id="GO:0009368">
    <property type="term" value="C:endopeptidase Clp complex"/>
    <property type="evidence" value="ECO:0007669"/>
    <property type="project" value="TreeGrafter"/>
</dbReference>
<dbReference type="GO" id="GO:0004176">
    <property type="term" value="F:ATP-dependent peptidase activity"/>
    <property type="evidence" value="ECO:0007669"/>
    <property type="project" value="InterPro"/>
</dbReference>
<dbReference type="GO" id="GO:0051117">
    <property type="term" value="F:ATPase binding"/>
    <property type="evidence" value="ECO:0007669"/>
    <property type="project" value="TreeGrafter"/>
</dbReference>
<dbReference type="GO" id="GO:0004252">
    <property type="term" value="F:serine-type endopeptidase activity"/>
    <property type="evidence" value="ECO:0007669"/>
    <property type="project" value="UniProtKB-UniRule"/>
</dbReference>
<dbReference type="GO" id="GO:0006515">
    <property type="term" value="P:protein quality control for misfolded or incompletely synthesized proteins"/>
    <property type="evidence" value="ECO:0007669"/>
    <property type="project" value="TreeGrafter"/>
</dbReference>
<dbReference type="CDD" id="cd07017">
    <property type="entry name" value="S14_ClpP_2"/>
    <property type="match status" value="1"/>
</dbReference>
<dbReference type="FunFam" id="3.90.226.10:FF:000001">
    <property type="entry name" value="ATP-dependent Clp protease proteolytic subunit"/>
    <property type="match status" value="1"/>
</dbReference>
<dbReference type="Gene3D" id="3.90.226.10">
    <property type="entry name" value="2-enoyl-CoA Hydratase, Chain A, domain 1"/>
    <property type="match status" value="1"/>
</dbReference>
<dbReference type="HAMAP" id="MF_00444">
    <property type="entry name" value="ClpP"/>
    <property type="match status" value="1"/>
</dbReference>
<dbReference type="InterPro" id="IPR001907">
    <property type="entry name" value="ClpP"/>
</dbReference>
<dbReference type="InterPro" id="IPR029045">
    <property type="entry name" value="ClpP/crotonase-like_dom_sf"/>
</dbReference>
<dbReference type="InterPro" id="IPR023562">
    <property type="entry name" value="ClpP/TepA"/>
</dbReference>
<dbReference type="InterPro" id="IPR033135">
    <property type="entry name" value="ClpP_His_AS"/>
</dbReference>
<dbReference type="InterPro" id="IPR018215">
    <property type="entry name" value="ClpP_Ser_AS"/>
</dbReference>
<dbReference type="NCBIfam" id="TIGR00493">
    <property type="entry name" value="clpP"/>
    <property type="match status" value="1"/>
</dbReference>
<dbReference type="NCBIfam" id="NF001368">
    <property type="entry name" value="PRK00277.1"/>
    <property type="match status" value="1"/>
</dbReference>
<dbReference type="NCBIfam" id="NF009205">
    <property type="entry name" value="PRK12553.1"/>
    <property type="match status" value="1"/>
</dbReference>
<dbReference type="PANTHER" id="PTHR10381">
    <property type="entry name" value="ATP-DEPENDENT CLP PROTEASE PROTEOLYTIC SUBUNIT"/>
    <property type="match status" value="1"/>
</dbReference>
<dbReference type="PANTHER" id="PTHR10381:SF70">
    <property type="entry name" value="ATP-DEPENDENT CLP PROTEASE PROTEOLYTIC SUBUNIT"/>
    <property type="match status" value="1"/>
</dbReference>
<dbReference type="Pfam" id="PF00574">
    <property type="entry name" value="CLP_protease"/>
    <property type="match status" value="1"/>
</dbReference>
<dbReference type="PRINTS" id="PR00127">
    <property type="entry name" value="CLPPROTEASEP"/>
</dbReference>
<dbReference type="SUPFAM" id="SSF52096">
    <property type="entry name" value="ClpP/crotonase"/>
    <property type="match status" value="1"/>
</dbReference>
<dbReference type="PROSITE" id="PS00382">
    <property type="entry name" value="CLP_PROTEASE_HIS"/>
    <property type="match status" value="1"/>
</dbReference>
<dbReference type="PROSITE" id="PS00381">
    <property type="entry name" value="CLP_PROTEASE_SER"/>
    <property type="match status" value="1"/>
</dbReference>
<protein>
    <recommendedName>
        <fullName evidence="1">ATP-dependent Clp protease proteolytic subunit</fullName>
        <ecNumber evidence="1">3.4.21.92</ecNumber>
    </recommendedName>
    <alternativeName>
        <fullName evidence="1">Endopeptidase Clp</fullName>
    </alternativeName>
</protein>
<evidence type="ECO:0000255" key="1">
    <source>
        <dbReference type="HAMAP-Rule" id="MF_00444"/>
    </source>
</evidence>
<sequence length="201" mass="22625">MSYVPIVIEQTSRGERAYDIYSRLLKERIIFVCSTVEDHMANLVVAQLLFLEAENPKKDIYMYINSPGGVVTAGLAIYDTMQYIKPKVATLCIGQACSMGSLLLCGGEKGMRYSLPHSRIMIHQPSGGYRGQATDIEIHAQETLKIKRLLNELYSKHTGQELKHIEKSMERDNFMSPEEAKKFGIIDNIISSRDAMTMSAK</sequence>
<organism>
    <name type="scientific">Rickettsia felis (strain ATCC VR-1525 / URRWXCal2)</name>
    <name type="common">Rickettsia azadi</name>
    <dbReference type="NCBI Taxonomy" id="315456"/>
    <lineage>
        <taxon>Bacteria</taxon>
        <taxon>Pseudomonadati</taxon>
        <taxon>Pseudomonadota</taxon>
        <taxon>Alphaproteobacteria</taxon>
        <taxon>Rickettsiales</taxon>
        <taxon>Rickettsiaceae</taxon>
        <taxon>Rickettsieae</taxon>
        <taxon>Rickettsia</taxon>
        <taxon>spotted fever group</taxon>
    </lineage>
</organism>